<protein>
    <recommendedName>
        <fullName evidence="1">Flap endonuclease Xni</fullName>
        <shortName evidence="1">FEN</shortName>
        <ecNumber evidence="1">3.1.-.-</ecNumber>
    </recommendedName>
</protein>
<feature type="chain" id="PRO_0000297868" description="Flap endonuclease Xni">
    <location>
        <begin position="1"/>
        <end position="262"/>
    </location>
</feature>
<feature type="domain" description="5'-3' exonuclease" evidence="1">
    <location>
        <begin position="171"/>
        <end position="258"/>
    </location>
</feature>
<feature type="region of interest" description="Interaction with DNA" evidence="1">
    <location>
        <begin position="192"/>
        <end position="197"/>
    </location>
</feature>
<feature type="binding site" evidence="1">
    <location>
        <position position="112"/>
    </location>
    <ligand>
        <name>Mg(2+)</name>
        <dbReference type="ChEBI" id="CHEBI:18420"/>
    </ligand>
</feature>
<feature type="binding site" evidence="1">
    <location>
        <position position="179"/>
    </location>
    <ligand>
        <name>K(+)</name>
        <dbReference type="ChEBI" id="CHEBI:29103"/>
    </ligand>
</feature>
<feature type="binding site" evidence="1">
    <location>
        <position position="190"/>
    </location>
    <ligand>
        <name>K(+)</name>
        <dbReference type="ChEBI" id="CHEBI:29103"/>
    </ligand>
</feature>
<feature type="binding site" evidence="1">
    <location>
        <position position="193"/>
    </location>
    <ligand>
        <name>K(+)</name>
        <dbReference type="ChEBI" id="CHEBI:29103"/>
    </ligand>
</feature>
<organism>
    <name type="scientific">Psychromonas ingrahamii (strain DSM 17664 / CCUG 51855 / 37)</name>
    <dbReference type="NCBI Taxonomy" id="357804"/>
    <lineage>
        <taxon>Bacteria</taxon>
        <taxon>Pseudomonadati</taxon>
        <taxon>Pseudomonadota</taxon>
        <taxon>Gammaproteobacteria</taxon>
        <taxon>Alteromonadales</taxon>
        <taxon>Psychromonadaceae</taxon>
        <taxon>Psychromonas</taxon>
    </lineage>
</organism>
<evidence type="ECO:0000255" key="1">
    <source>
        <dbReference type="HAMAP-Rule" id="MF_01192"/>
    </source>
</evidence>
<gene>
    <name evidence="1" type="primary">xni</name>
    <name evidence="1" type="synonym">ygdG</name>
    <name type="ordered locus">Ping_2776</name>
</gene>
<accession>A1SYB8</accession>
<dbReference type="EC" id="3.1.-.-" evidence="1"/>
<dbReference type="EMBL" id="CP000510">
    <property type="protein sequence ID" value="ABM04483.1"/>
    <property type="molecule type" value="Genomic_DNA"/>
</dbReference>
<dbReference type="RefSeq" id="WP_011771038.1">
    <property type="nucleotide sequence ID" value="NC_008709.1"/>
</dbReference>
<dbReference type="SMR" id="A1SYB8"/>
<dbReference type="STRING" id="357804.Ping_2776"/>
<dbReference type="KEGG" id="pin:Ping_2776"/>
<dbReference type="eggNOG" id="COG0258">
    <property type="taxonomic scope" value="Bacteria"/>
</dbReference>
<dbReference type="HOGENOM" id="CLU_004675_1_2_6"/>
<dbReference type="OrthoDB" id="8070997at2"/>
<dbReference type="Proteomes" id="UP000000639">
    <property type="component" value="Chromosome"/>
</dbReference>
<dbReference type="GO" id="GO:0008409">
    <property type="term" value="F:5'-3' exonuclease activity"/>
    <property type="evidence" value="ECO:0007669"/>
    <property type="project" value="InterPro"/>
</dbReference>
<dbReference type="GO" id="GO:0017108">
    <property type="term" value="F:5'-flap endonuclease activity"/>
    <property type="evidence" value="ECO:0007669"/>
    <property type="project" value="UniProtKB-UniRule"/>
</dbReference>
<dbReference type="GO" id="GO:0003677">
    <property type="term" value="F:DNA binding"/>
    <property type="evidence" value="ECO:0007669"/>
    <property type="project" value="UniProtKB-UniRule"/>
</dbReference>
<dbReference type="GO" id="GO:0000287">
    <property type="term" value="F:magnesium ion binding"/>
    <property type="evidence" value="ECO:0007669"/>
    <property type="project" value="UniProtKB-UniRule"/>
</dbReference>
<dbReference type="GO" id="GO:0030955">
    <property type="term" value="F:potassium ion binding"/>
    <property type="evidence" value="ECO:0007669"/>
    <property type="project" value="UniProtKB-UniRule"/>
</dbReference>
<dbReference type="GO" id="GO:0033567">
    <property type="term" value="P:DNA replication, Okazaki fragment processing"/>
    <property type="evidence" value="ECO:0007669"/>
    <property type="project" value="UniProtKB-UniRule"/>
</dbReference>
<dbReference type="CDD" id="cd09898">
    <property type="entry name" value="H3TH_53EXO"/>
    <property type="match status" value="1"/>
</dbReference>
<dbReference type="CDD" id="cd09859">
    <property type="entry name" value="PIN_53EXO"/>
    <property type="match status" value="1"/>
</dbReference>
<dbReference type="FunFam" id="1.10.150.20:FF:000003">
    <property type="entry name" value="DNA polymerase I"/>
    <property type="match status" value="1"/>
</dbReference>
<dbReference type="Gene3D" id="1.10.150.20">
    <property type="entry name" value="5' to 3' exonuclease, C-terminal subdomain"/>
    <property type="match status" value="1"/>
</dbReference>
<dbReference type="Gene3D" id="3.40.50.1010">
    <property type="entry name" value="5'-nuclease"/>
    <property type="match status" value="1"/>
</dbReference>
<dbReference type="HAMAP" id="MF_01192">
    <property type="entry name" value="Xni"/>
    <property type="match status" value="1"/>
</dbReference>
<dbReference type="InterPro" id="IPR020046">
    <property type="entry name" value="5-3_exonucl_a-hlix_arch_N"/>
</dbReference>
<dbReference type="InterPro" id="IPR002421">
    <property type="entry name" value="5-3_exonuclease"/>
</dbReference>
<dbReference type="InterPro" id="IPR036279">
    <property type="entry name" value="5-3_exonuclease_C_sf"/>
</dbReference>
<dbReference type="InterPro" id="IPR020045">
    <property type="entry name" value="DNA_polI_H3TH"/>
</dbReference>
<dbReference type="InterPro" id="IPR038969">
    <property type="entry name" value="FEN"/>
</dbReference>
<dbReference type="InterPro" id="IPR008918">
    <property type="entry name" value="HhH2"/>
</dbReference>
<dbReference type="InterPro" id="IPR029060">
    <property type="entry name" value="PIN-like_dom_sf"/>
</dbReference>
<dbReference type="InterPro" id="IPR022895">
    <property type="entry name" value="Xni"/>
</dbReference>
<dbReference type="NCBIfam" id="NF007017">
    <property type="entry name" value="PRK09482.1"/>
    <property type="match status" value="1"/>
</dbReference>
<dbReference type="PANTHER" id="PTHR42646:SF2">
    <property type="entry name" value="5'-3' EXONUCLEASE FAMILY PROTEIN"/>
    <property type="match status" value="1"/>
</dbReference>
<dbReference type="PANTHER" id="PTHR42646">
    <property type="entry name" value="FLAP ENDONUCLEASE XNI"/>
    <property type="match status" value="1"/>
</dbReference>
<dbReference type="Pfam" id="PF01367">
    <property type="entry name" value="5_3_exonuc"/>
    <property type="match status" value="1"/>
</dbReference>
<dbReference type="Pfam" id="PF02739">
    <property type="entry name" value="5_3_exonuc_N"/>
    <property type="match status" value="1"/>
</dbReference>
<dbReference type="SMART" id="SM00475">
    <property type="entry name" value="53EXOc"/>
    <property type="match status" value="1"/>
</dbReference>
<dbReference type="SMART" id="SM00279">
    <property type="entry name" value="HhH2"/>
    <property type="match status" value="1"/>
</dbReference>
<dbReference type="SUPFAM" id="SSF47807">
    <property type="entry name" value="5' to 3' exonuclease, C-terminal subdomain"/>
    <property type="match status" value="1"/>
</dbReference>
<dbReference type="SUPFAM" id="SSF88723">
    <property type="entry name" value="PIN domain-like"/>
    <property type="match status" value="1"/>
</dbReference>
<name>XNI_PSYIN</name>
<proteinExistence type="inferred from homology"/>
<keyword id="KW-0238">DNA-binding</keyword>
<keyword id="KW-0255">Endonuclease</keyword>
<keyword id="KW-0378">Hydrolase</keyword>
<keyword id="KW-0460">Magnesium</keyword>
<keyword id="KW-0479">Metal-binding</keyword>
<keyword id="KW-0540">Nuclease</keyword>
<keyword id="KW-0630">Potassium</keyword>
<keyword id="KW-1185">Reference proteome</keyword>
<sequence>MISTLLIIDAMNLVRRIYAVQQKQHGDTPTALIATQSTTTNALKKLLRIHQPTHAICVFDSHAPSWRHQIYPEYKQGRKPIPELLKQGLPAIQEQFFDLGIDSLVTEEDEADDLIACLADKIAKQQQKCIIVSTDKGFYQLLNESIQLYDYFQNSFVIRQQVHQKMGISIQQLNDYWAITGISSSAIKGVEGIGSKGALSLLQQYGSLNNIFQQAEDSNNKLLTKIKSQQSNAILAKQLVTLKTDIKLGFNLKDLRYTDSTD</sequence>
<comment type="function">
    <text evidence="1">Has flap endonuclease activity. During DNA replication, flap endonucleases cleave the 5'-overhanging flap structure that is generated by displacement synthesis when DNA polymerase encounters the 5'-end of a downstream Okazaki fragment.</text>
</comment>
<comment type="cofactor">
    <cofactor evidence="1">
        <name>Mg(2+)</name>
        <dbReference type="ChEBI" id="CHEBI:18420"/>
    </cofactor>
    <text evidence="1">Binds 2 Mg(2+) per subunit. Only one magnesium ion has a direct interaction with the protein, the other interactions are indirect.</text>
</comment>
<comment type="cofactor">
    <cofactor evidence="1">
        <name>K(+)</name>
        <dbReference type="ChEBI" id="CHEBI:29103"/>
    </cofactor>
    <text evidence="1">Binds 1 K(+) per subunit. The potassium ion strongly increases the affinity for DNA.</text>
</comment>
<comment type="similarity">
    <text evidence="1">Belongs to the Xni family.</text>
</comment>
<reference key="1">
    <citation type="journal article" date="2008" name="BMC Genomics">
        <title>Genomics of an extreme psychrophile, Psychromonas ingrahamii.</title>
        <authorList>
            <person name="Riley M."/>
            <person name="Staley J.T."/>
            <person name="Danchin A."/>
            <person name="Wang T.Z."/>
            <person name="Brettin T.S."/>
            <person name="Hauser L.J."/>
            <person name="Land M.L."/>
            <person name="Thompson L.S."/>
        </authorList>
    </citation>
    <scope>NUCLEOTIDE SEQUENCE [LARGE SCALE GENOMIC DNA]</scope>
    <source>
        <strain>DSM 17664 / CCUG 51855 / 37</strain>
    </source>
</reference>